<keyword id="KW-0520">NAD</keyword>
<keyword id="KW-0808">Transferase</keyword>
<organism>
    <name type="scientific">Streptomyces griseus subsp. griseus (strain JCM 4626 / CBS 651.72 / NBRC 13350 / KCC S-0626 / ISP 5235)</name>
    <dbReference type="NCBI Taxonomy" id="455632"/>
    <lineage>
        <taxon>Bacteria</taxon>
        <taxon>Bacillati</taxon>
        <taxon>Actinomycetota</taxon>
        <taxon>Actinomycetes</taxon>
        <taxon>Kitasatosporales</taxon>
        <taxon>Streptomycetaceae</taxon>
        <taxon>Streptomyces</taxon>
    </lineage>
</organism>
<protein>
    <recommendedName>
        <fullName evidence="1">Probable RNA 2'-phosphotransferase</fullName>
        <ecNumber evidence="1">2.7.1.-</ecNumber>
    </recommendedName>
</protein>
<sequence>MDERRTVKVSKYLSKHLRHQPERIGLTLDENGWVAVEELLRAAARHGFAFSRAELDHVVAANDKRRFTVENGCAADGVHGDRIRANQGHTVAVDLDLPPAEPPAHLYHGTVARVMDAIRTEGLRPMARHHVHLSPDRETATRVGARRGRPLVLTVDAGAMHRAGHVFRVSANGVWLADAVPPRFLLLRG</sequence>
<gene>
    <name evidence="1" type="primary">kptA</name>
    <name type="ordered locus">SGR_3640</name>
</gene>
<feature type="chain" id="PRO_1000115316" description="Probable RNA 2'-phosphotransferase">
    <location>
        <begin position="1"/>
        <end position="189"/>
    </location>
</feature>
<name>KPTA_STRGG</name>
<reference key="1">
    <citation type="journal article" date="2008" name="J. Bacteriol.">
        <title>Genome sequence of the streptomycin-producing microorganism Streptomyces griseus IFO 13350.</title>
        <authorList>
            <person name="Ohnishi Y."/>
            <person name="Ishikawa J."/>
            <person name="Hara H."/>
            <person name="Suzuki H."/>
            <person name="Ikenoya M."/>
            <person name="Ikeda H."/>
            <person name="Yamashita A."/>
            <person name="Hattori M."/>
            <person name="Horinouchi S."/>
        </authorList>
    </citation>
    <scope>NUCLEOTIDE SEQUENCE [LARGE SCALE GENOMIC DNA]</scope>
    <source>
        <strain>JCM 4626 / CBS 651.72 / NBRC 13350 / KCC S-0626 / ISP 5235</strain>
    </source>
</reference>
<accession>B1VP90</accession>
<comment type="function">
    <text evidence="1">Removes the 2'-phosphate from RNA via an intermediate in which the phosphate is ADP-ribosylated by NAD followed by a presumed transesterification to release the RNA and generate ADP-ribose 1''-2''-cyclic phosphate (APPR&gt;P). May function as an ADP-ribosylase.</text>
</comment>
<comment type="similarity">
    <text evidence="1">Belongs to the KptA/TPT1 family.</text>
</comment>
<evidence type="ECO:0000255" key="1">
    <source>
        <dbReference type="HAMAP-Rule" id="MF_00299"/>
    </source>
</evidence>
<proteinExistence type="inferred from homology"/>
<dbReference type="EC" id="2.7.1.-" evidence="1"/>
<dbReference type="EMBL" id="AP009493">
    <property type="protein sequence ID" value="BAG20469.1"/>
    <property type="molecule type" value="Genomic_DNA"/>
</dbReference>
<dbReference type="RefSeq" id="WP_012380051.1">
    <property type="nucleotide sequence ID" value="NC_010572.1"/>
</dbReference>
<dbReference type="SMR" id="B1VP90"/>
<dbReference type="KEGG" id="sgr:SGR_3640"/>
<dbReference type="PATRIC" id="fig|455632.4.peg.3708"/>
<dbReference type="eggNOG" id="COG1859">
    <property type="taxonomic scope" value="Bacteria"/>
</dbReference>
<dbReference type="HOGENOM" id="CLU_052998_4_0_11"/>
<dbReference type="Proteomes" id="UP000001685">
    <property type="component" value="Chromosome"/>
</dbReference>
<dbReference type="GO" id="GO:0003950">
    <property type="term" value="F:NAD+ poly-ADP-ribosyltransferase activity"/>
    <property type="evidence" value="ECO:0007669"/>
    <property type="project" value="InterPro"/>
</dbReference>
<dbReference type="GO" id="GO:0000215">
    <property type="term" value="F:tRNA 2'-phosphotransferase activity"/>
    <property type="evidence" value="ECO:0007669"/>
    <property type="project" value="TreeGrafter"/>
</dbReference>
<dbReference type="GO" id="GO:0006388">
    <property type="term" value="P:tRNA splicing, via endonucleolytic cleavage and ligation"/>
    <property type="evidence" value="ECO:0007669"/>
    <property type="project" value="UniProtKB-UniRule"/>
</dbReference>
<dbReference type="Gene3D" id="3.20.170.30">
    <property type="match status" value="1"/>
</dbReference>
<dbReference type="Gene3D" id="1.10.10.970">
    <property type="entry name" value="RNA 2'-phosphotransferase, Tpt1/KptA family, N-terminal domain"/>
    <property type="match status" value="1"/>
</dbReference>
<dbReference type="HAMAP" id="MF_00299">
    <property type="entry name" value="KptA"/>
    <property type="match status" value="1"/>
</dbReference>
<dbReference type="InterPro" id="IPR002745">
    <property type="entry name" value="Ptrans_KptA/Tpt1"/>
</dbReference>
<dbReference type="InterPro" id="IPR042081">
    <property type="entry name" value="RNA_2'-PTrans_C"/>
</dbReference>
<dbReference type="InterPro" id="IPR022928">
    <property type="entry name" value="RNA_2'-PTrans_KptA"/>
</dbReference>
<dbReference type="InterPro" id="IPR042080">
    <property type="entry name" value="RNA_2'-PTrans_N"/>
</dbReference>
<dbReference type="NCBIfam" id="NF002014">
    <property type="entry name" value="PRK00819.1-4"/>
    <property type="match status" value="1"/>
</dbReference>
<dbReference type="PANTHER" id="PTHR12684">
    <property type="entry name" value="PUTATIVE PHOSPHOTRANSFERASE"/>
    <property type="match status" value="1"/>
</dbReference>
<dbReference type="PANTHER" id="PTHR12684:SF2">
    <property type="entry name" value="TRNA 2'-PHOSPHOTRANSFERASE 1"/>
    <property type="match status" value="1"/>
</dbReference>
<dbReference type="Pfam" id="PF01885">
    <property type="entry name" value="PTS_2-RNA"/>
    <property type="match status" value="1"/>
</dbReference>
<dbReference type="SUPFAM" id="SSF56399">
    <property type="entry name" value="ADP-ribosylation"/>
    <property type="match status" value="1"/>
</dbReference>